<dbReference type="EMBL" id="CP000800">
    <property type="protein sequence ID" value="ABV18344.1"/>
    <property type="molecule type" value="Genomic_DNA"/>
</dbReference>
<dbReference type="RefSeq" id="WP_000579833.1">
    <property type="nucleotide sequence ID" value="NC_009801.1"/>
</dbReference>
<dbReference type="SMR" id="A7ZSK9"/>
<dbReference type="GeneID" id="86948184"/>
<dbReference type="KEGG" id="ecw:EcE24377A_3803"/>
<dbReference type="HOGENOM" id="CLU_044142_4_1_6"/>
<dbReference type="Proteomes" id="UP000001122">
    <property type="component" value="Chromosome"/>
</dbReference>
<dbReference type="GO" id="GO:0022625">
    <property type="term" value="C:cytosolic large ribosomal subunit"/>
    <property type="evidence" value="ECO:0007669"/>
    <property type="project" value="TreeGrafter"/>
</dbReference>
<dbReference type="GO" id="GO:0019843">
    <property type="term" value="F:rRNA binding"/>
    <property type="evidence" value="ECO:0007669"/>
    <property type="project" value="UniProtKB-UniRule"/>
</dbReference>
<dbReference type="GO" id="GO:0003735">
    <property type="term" value="F:structural constituent of ribosome"/>
    <property type="evidence" value="ECO:0007669"/>
    <property type="project" value="InterPro"/>
</dbReference>
<dbReference type="GO" id="GO:0006412">
    <property type="term" value="P:translation"/>
    <property type="evidence" value="ECO:0007669"/>
    <property type="project" value="UniProtKB-UniRule"/>
</dbReference>
<dbReference type="FunFam" id="2.40.30.10:FF:000004">
    <property type="entry name" value="50S ribosomal protein L3"/>
    <property type="match status" value="1"/>
</dbReference>
<dbReference type="FunFam" id="3.30.160.810:FF:000001">
    <property type="entry name" value="50S ribosomal protein L3"/>
    <property type="match status" value="1"/>
</dbReference>
<dbReference type="Gene3D" id="3.30.160.810">
    <property type="match status" value="1"/>
</dbReference>
<dbReference type="Gene3D" id="2.40.30.10">
    <property type="entry name" value="Translation factors"/>
    <property type="match status" value="1"/>
</dbReference>
<dbReference type="HAMAP" id="MF_01325_B">
    <property type="entry name" value="Ribosomal_uL3_B"/>
    <property type="match status" value="1"/>
</dbReference>
<dbReference type="InterPro" id="IPR000597">
    <property type="entry name" value="Ribosomal_uL3"/>
</dbReference>
<dbReference type="InterPro" id="IPR019927">
    <property type="entry name" value="Ribosomal_uL3_bac/org-type"/>
</dbReference>
<dbReference type="InterPro" id="IPR019926">
    <property type="entry name" value="Ribosomal_uL3_CS"/>
</dbReference>
<dbReference type="InterPro" id="IPR009000">
    <property type="entry name" value="Transl_B-barrel_sf"/>
</dbReference>
<dbReference type="NCBIfam" id="TIGR03625">
    <property type="entry name" value="L3_bact"/>
    <property type="match status" value="1"/>
</dbReference>
<dbReference type="PANTHER" id="PTHR11229">
    <property type="entry name" value="50S RIBOSOMAL PROTEIN L3"/>
    <property type="match status" value="1"/>
</dbReference>
<dbReference type="PANTHER" id="PTHR11229:SF16">
    <property type="entry name" value="LARGE RIBOSOMAL SUBUNIT PROTEIN UL3C"/>
    <property type="match status" value="1"/>
</dbReference>
<dbReference type="Pfam" id="PF00297">
    <property type="entry name" value="Ribosomal_L3"/>
    <property type="match status" value="1"/>
</dbReference>
<dbReference type="SUPFAM" id="SSF50447">
    <property type="entry name" value="Translation proteins"/>
    <property type="match status" value="1"/>
</dbReference>
<dbReference type="PROSITE" id="PS00474">
    <property type="entry name" value="RIBOSOMAL_L3"/>
    <property type="match status" value="1"/>
</dbReference>
<protein>
    <recommendedName>
        <fullName evidence="1">Large ribosomal subunit protein uL3</fullName>
    </recommendedName>
    <alternativeName>
        <fullName evidence="2">50S ribosomal protein L3</fullName>
    </alternativeName>
</protein>
<accession>A7ZSK9</accession>
<keyword id="KW-0488">Methylation</keyword>
<keyword id="KW-1185">Reference proteome</keyword>
<keyword id="KW-0687">Ribonucleoprotein</keyword>
<keyword id="KW-0689">Ribosomal protein</keyword>
<keyword id="KW-0694">RNA-binding</keyword>
<keyword id="KW-0699">rRNA-binding</keyword>
<reference key="1">
    <citation type="journal article" date="2008" name="J. Bacteriol.">
        <title>The pangenome structure of Escherichia coli: comparative genomic analysis of E. coli commensal and pathogenic isolates.</title>
        <authorList>
            <person name="Rasko D.A."/>
            <person name="Rosovitz M.J."/>
            <person name="Myers G.S.A."/>
            <person name="Mongodin E.F."/>
            <person name="Fricke W.F."/>
            <person name="Gajer P."/>
            <person name="Crabtree J."/>
            <person name="Sebaihia M."/>
            <person name="Thomson N.R."/>
            <person name="Chaudhuri R."/>
            <person name="Henderson I.R."/>
            <person name="Sperandio V."/>
            <person name="Ravel J."/>
        </authorList>
    </citation>
    <scope>NUCLEOTIDE SEQUENCE [LARGE SCALE GENOMIC DNA]</scope>
    <source>
        <strain>E24377A / ETEC</strain>
    </source>
</reference>
<feature type="chain" id="PRO_1000067561" description="Large ribosomal subunit protein uL3">
    <location>
        <begin position="1"/>
        <end position="209"/>
    </location>
</feature>
<feature type="modified residue" description="N5-methylglutamine" evidence="1">
    <location>
        <position position="150"/>
    </location>
</feature>
<name>RL3_ECO24</name>
<proteinExistence type="inferred from homology"/>
<comment type="function">
    <text evidence="1">One of the primary rRNA binding proteins, it binds directly near the 3'-end of the 23S rRNA, where it nucleates assembly of the 50S subunit.</text>
</comment>
<comment type="subunit">
    <text evidence="1">Part of the 50S ribosomal subunit. Forms a cluster with proteins L14 and L19.</text>
</comment>
<comment type="PTM">
    <text evidence="1">Methylated by PrmB.</text>
</comment>
<comment type="similarity">
    <text evidence="1">Belongs to the universal ribosomal protein uL3 family.</text>
</comment>
<gene>
    <name evidence="1" type="primary">rplC</name>
    <name type="ordered locus">EcE24377A_3803</name>
</gene>
<evidence type="ECO:0000255" key="1">
    <source>
        <dbReference type="HAMAP-Rule" id="MF_01325"/>
    </source>
</evidence>
<evidence type="ECO:0000305" key="2"/>
<organism>
    <name type="scientific">Escherichia coli O139:H28 (strain E24377A / ETEC)</name>
    <dbReference type="NCBI Taxonomy" id="331111"/>
    <lineage>
        <taxon>Bacteria</taxon>
        <taxon>Pseudomonadati</taxon>
        <taxon>Pseudomonadota</taxon>
        <taxon>Gammaproteobacteria</taxon>
        <taxon>Enterobacterales</taxon>
        <taxon>Enterobacteriaceae</taxon>
        <taxon>Escherichia</taxon>
    </lineage>
</organism>
<sequence>MIGLVGKKVGMTRIFTEDGVSIPVTVIEVEANRVTQVKDLANDGYRAIQVTTGAKKANRVTKPEAGHFAKAGVEAGRGLWEFRLAEGEEFTVGQSISVELFADVKKVDVTGTSKGKGFAGTVKRWNFRTQDATHGNSLSHRVPGSIGQNQTPGKVFKGKKMAGQMGNERVTVQSLDVVRVDAERNLLLVKGAVPGATGSDLIVKPAVKA</sequence>